<comment type="function">
    <text evidence="2">Structural protein involved in oral morphogenesis and in pronuclear behavior during conjugation. Respiratory enzyme.</text>
</comment>
<comment type="catalytic activity">
    <reaction evidence="1">
        <text>oxaloacetate + acetyl-CoA + H2O = citrate + CoA + H(+)</text>
        <dbReference type="Rhea" id="RHEA:16845"/>
        <dbReference type="ChEBI" id="CHEBI:15377"/>
        <dbReference type="ChEBI" id="CHEBI:15378"/>
        <dbReference type="ChEBI" id="CHEBI:16452"/>
        <dbReference type="ChEBI" id="CHEBI:16947"/>
        <dbReference type="ChEBI" id="CHEBI:57287"/>
        <dbReference type="ChEBI" id="CHEBI:57288"/>
        <dbReference type="EC" id="2.3.3.16"/>
    </reaction>
</comment>
<comment type="pathway">
    <text>Carbohydrate metabolism; tricarboxylic acid cycle; isocitrate from oxaloacetate: step 1/2.</text>
</comment>
<comment type="subunit">
    <text>Homodimer.</text>
</comment>
<comment type="subcellular location">
    <subcellularLocation>
        <location evidence="2">Mitochondrion matrix</location>
    </subcellularLocation>
    <subcellularLocation>
        <location evidence="2">Cytoplasm</location>
    </subcellularLocation>
    <subcellularLocation>
        <location evidence="2">Cytoplasm</location>
        <location evidence="2">Cytoskeleton</location>
    </subcellularLocation>
</comment>
<comment type="miscellaneous">
    <text>Citrate synthase is found in nearly all cells capable of oxidative metabolism.</text>
</comment>
<comment type="similarity">
    <text evidence="3">Belongs to the citrate synthase family.</text>
</comment>
<organism>
    <name type="scientific">Tetrahymena thermophila</name>
    <dbReference type="NCBI Taxonomy" id="5911"/>
    <lineage>
        <taxon>Eukaryota</taxon>
        <taxon>Sar</taxon>
        <taxon>Alveolata</taxon>
        <taxon>Ciliophora</taxon>
        <taxon>Intramacronucleata</taxon>
        <taxon>Oligohymenophorea</taxon>
        <taxon>Hymenostomatida</taxon>
        <taxon>Tetrahymenina</taxon>
        <taxon>Tetrahymenidae</taxon>
        <taxon>Tetrahymena</taxon>
    </lineage>
</organism>
<evidence type="ECO:0000255" key="1">
    <source>
        <dbReference type="PROSITE-ProRule" id="PRU10117"/>
    </source>
</evidence>
<evidence type="ECO:0000269" key="2">
    <source>
    </source>
</evidence>
<evidence type="ECO:0000305" key="3"/>
<protein>
    <recommendedName>
        <fullName>Citrate synthase, mitochondrial</fullName>
        <ecNumber>2.3.3.16</ecNumber>
    </recommendedName>
    <alternativeName>
        <fullName>14 nm filament-forming protein</fullName>
    </alternativeName>
    <alternativeName>
        <fullName>49 kDa protein</fullName>
    </alternativeName>
</protein>
<sequence length="462" mass="52575">MRSINQLLKQASLSQKSQYNFSQTNLKKVIAEIIPQKQAELKEVKEKYGDKVVGQYTVKQVIGGMRGMKGLMSDLSRCDPYQGIIFRGYTIPQLKEFLPKADPKAADQANQEPLPEGIFWLLMTGQLPTHAQVDALKHEWQNRGTVNQDCVNFILNLPKDLHSMTMLSMALLYLQKDSKFAKLYDEGKISKKDYWEPFYEDSMDLIAKIPRVAAIIYRHKYRDSKLIDSDSKLDWAGNYAHMMGFEQHVVKECIRGYLSIHCDHEGGNVSAHTTHLVGSALSDPYLSYSAGVNGLAGPLHGLANQEVLKWLLQFIEEKGTKVSDKDIEDYVDHVISSGRVVPGYGHAVLRDTDPRFHHQVDFSKFHLKDDQMIKLLHQCADVIPKKLLTYKKIANPYPNVDCHSGVLLYSLGLTEYQYYTVVFAVSRALGCMANLIWSRAFGLPIERPGSADLKWFHDKYRE</sequence>
<dbReference type="EC" id="2.3.3.16"/>
<dbReference type="EMBL" id="D90117">
    <property type="protein sequence ID" value="BAA14145.1"/>
    <property type="molecule type" value="mRNA"/>
</dbReference>
<dbReference type="PIR" id="JC5625">
    <property type="entry name" value="JC5625"/>
</dbReference>
<dbReference type="SMR" id="P24118"/>
<dbReference type="UniPathway" id="UPA00223">
    <property type="reaction ID" value="UER00717"/>
</dbReference>
<dbReference type="GO" id="GO:0005856">
    <property type="term" value="C:cytoskeleton"/>
    <property type="evidence" value="ECO:0007669"/>
    <property type="project" value="UniProtKB-SubCell"/>
</dbReference>
<dbReference type="GO" id="GO:0005759">
    <property type="term" value="C:mitochondrial matrix"/>
    <property type="evidence" value="ECO:0007669"/>
    <property type="project" value="UniProtKB-SubCell"/>
</dbReference>
<dbReference type="GO" id="GO:0004108">
    <property type="term" value="F:citrate (Si)-synthase activity"/>
    <property type="evidence" value="ECO:0007669"/>
    <property type="project" value="TreeGrafter"/>
</dbReference>
<dbReference type="GO" id="GO:0005975">
    <property type="term" value="P:carbohydrate metabolic process"/>
    <property type="evidence" value="ECO:0007669"/>
    <property type="project" value="TreeGrafter"/>
</dbReference>
<dbReference type="GO" id="GO:0006099">
    <property type="term" value="P:tricarboxylic acid cycle"/>
    <property type="evidence" value="ECO:0007669"/>
    <property type="project" value="UniProtKB-UniPathway"/>
</dbReference>
<dbReference type="CDD" id="cd06103">
    <property type="entry name" value="ScCS-like"/>
    <property type="match status" value="1"/>
</dbReference>
<dbReference type="Gene3D" id="1.10.580.10">
    <property type="entry name" value="Citrate Synthase, domain 1"/>
    <property type="match status" value="1"/>
</dbReference>
<dbReference type="Gene3D" id="1.10.230.10">
    <property type="entry name" value="Cytochrome P450-Terp, domain 2"/>
    <property type="match status" value="1"/>
</dbReference>
<dbReference type="InterPro" id="IPR016142">
    <property type="entry name" value="Citrate_synth-like_lrg_a-sub"/>
</dbReference>
<dbReference type="InterPro" id="IPR016143">
    <property type="entry name" value="Citrate_synth-like_sm_a-sub"/>
</dbReference>
<dbReference type="InterPro" id="IPR002020">
    <property type="entry name" value="Citrate_synthase"/>
</dbReference>
<dbReference type="InterPro" id="IPR019810">
    <property type="entry name" value="Citrate_synthase_AS"/>
</dbReference>
<dbReference type="InterPro" id="IPR036969">
    <property type="entry name" value="Citrate_synthase_sf"/>
</dbReference>
<dbReference type="NCBIfam" id="NF007128">
    <property type="entry name" value="PRK09569.1"/>
    <property type="match status" value="1"/>
</dbReference>
<dbReference type="PANTHER" id="PTHR11739">
    <property type="entry name" value="CITRATE SYNTHASE"/>
    <property type="match status" value="1"/>
</dbReference>
<dbReference type="PANTHER" id="PTHR11739:SF8">
    <property type="entry name" value="CITRATE SYNTHASE, MITOCHONDRIAL"/>
    <property type="match status" value="1"/>
</dbReference>
<dbReference type="Pfam" id="PF00285">
    <property type="entry name" value="Citrate_synt"/>
    <property type="match status" value="1"/>
</dbReference>
<dbReference type="PRINTS" id="PR00143">
    <property type="entry name" value="CITRTSNTHASE"/>
</dbReference>
<dbReference type="SUPFAM" id="SSF48256">
    <property type="entry name" value="Citrate synthase"/>
    <property type="match status" value="1"/>
</dbReference>
<dbReference type="PROSITE" id="PS00480">
    <property type="entry name" value="CITRATE_SYNTHASE"/>
    <property type="match status" value="1"/>
</dbReference>
<feature type="transit peptide" description="Mitochondrion" evidence="2">
    <location>
        <begin position="1"/>
        <end position="21"/>
    </location>
</feature>
<feature type="chain" id="PRO_0000005474" description="Citrate synthase, mitochondrial">
    <location>
        <begin position="22"/>
        <end position="462"/>
    </location>
</feature>
<feature type="active site" evidence="1">
    <location>
        <position position="300"/>
    </location>
</feature>
<feature type="active site" evidence="1">
    <location>
        <position position="346"/>
    </location>
</feature>
<feature type="active site" evidence="1">
    <location>
        <position position="401"/>
    </location>
</feature>
<reference key="1">
    <citation type="journal article" date="1991" name="Biochem. Biophys. Res. Commun.">
        <title>Tetrahymena 14-nm filament-forming protein has citrate synthase activity.</title>
        <authorList>
            <person name="Numata O."/>
            <person name="Takemasa T."/>
            <person name="Takagi I."/>
            <person name="Hirono M."/>
            <person name="Hirano H."/>
            <person name="Chiba J."/>
            <person name="Watanabe Y."/>
        </authorList>
    </citation>
    <scope>NUCLEOTIDE SEQUENCE [MRNA]</scope>
    <scope>PROTEIN SEQUENCE OF 22-40</scope>
    <scope>SUBCELLULAR LOCATION</scope>
    <scope>FUNCTION</scope>
</reference>
<name>CISY_TETTH</name>
<proteinExistence type="evidence at protein level"/>
<accession>P24118</accession>
<keyword id="KW-0963">Cytoplasm</keyword>
<keyword id="KW-0206">Cytoskeleton</keyword>
<keyword id="KW-0903">Direct protein sequencing</keyword>
<keyword id="KW-0496">Mitochondrion</keyword>
<keyword id="KW-0808">Transferase</keyword>
<keyword id="KW-0809">Transit peptide</keyword>
<keyword id="KW-0816">Tricarboxylic acid cycle</keyword>